<proteinExistence type="inferred from homology"/>
<name>ASSY_BRUA1</name>
<evidence type="ECO:0000255" key="1">
    <source>
        <dbReference type="HAMAP-Rule" id="MF_00005"/>
    </source>
</evidence>
<comment type="catalytic activity">
    <reaction evidence="1">
        <text>L-citrulline + L-aspartate + ATP = 2-(N(omega)-L-arginino)succinate + AMP + diphosphate + H(+)</text>
        <dbReference type="Rhea" id="RHEA:10932"/>
        <dbReference type="ChEBI" id="CHEBI:15378"/>
        <dbReference type="ChEBI" id="CHEBI:29991"/>
        <dbReference type="ChEBI" id="CHEBI:30616"/>
        <dbReference type="ChEBI" id="CHEBI:33019"/>
        <dbReference type="ChEBI" id="CHEBI:57472"/>
        <dbReference type="ChEBI" id="CHEBI:57743"/>
        <dbReference type="ChEBI" id="CHEBI:456215"/>
        <dbReference type="EC" id="6.3.4.5"/>
    </reaction>
</comment>
<comment type="pathway">
    <text evidence="1">Amino-acid biosynthesis; L-arginine biosynthesis; L-arginine from L-ornithine and carbamoyl phosphate: step 2/3.</text>
</comment>
<comment type="subunit">
    <text evidence="1">Homotetramer.</text>
</comment>
<comment type="subcellular location">
    <subcellularLocation>
        <location evidence="1">Cytoplasm</location>
    </subcellularLocation>
</comment>
<comment type="similarity">
    <text evidence="1">Belongs to the argininosuccinate synthase family. Type 1 subfamily.</text>
</comment>
<gene>
    <name evidence="1" type="primary">argG</name>
    <name type="ordered locus">BAbS19_I00670</name>
</gene>
<organism>
    <name type="scientific">Brucella abortus (strain S19)</name>
    <dbReference type="NCBI Taxonomy" id="430066"/>
    <lineage>
        <taxon>Bacteria</taxon>
        <taxon>Pseudomonadati</taxon>
        <taxon>Pseudomonadota</taxon>
        <taxon>Alphaproteobacteria</taxon>
        <taxon>Hyphomicrobiales</taxon>
        <taxon>Brucellaceae</taxon>
        <taxon>Brucella/Ochrobactrum group</taxon>
        <taxon>Brucella</taxon>
    </lineage>
</organism>
<keyword id="KW-0028">Amino-acid biosynthesis</keyword>
<keyword id="KW-0055">Arginine biosynthesis</keyword>
<keyword id="KW-0067">ATP-binding</keyword>
<keyword id="KW-0963">Cytoplasm</keyword>
<keyword id="KW-0436">Ligase</keyword>
<keyword id="KW-0547">Nucleotide-binding</keyword>
<dbReference type="EC" id="6.3.4.5" evidence="1"/>
<dbReference type="EMBL" id="CP000887">
    <property type="protein sequence ID" value="ACD71627.1"/>
    <property type="molecule type" value="Genomic_DNA"/>
</dbReference>
<dbReference type="RefSeq" id="WP_002965322.1">
    <property type="nucleotide sequence ID" value="NC_010742.1"/>
</dbReference>
<dbReference type="SMR" id="B2S7X3"/>
<dbReference type="KEGG" id="bmc:BAbS19_I00670"/>
<dbReference type="HOGENOM" id="CLU_032784_4_2_5"/>
<dbReference type="UniPathway" id="UPA00068">
    <property type="reaction ID" value="UER00113"/>
</dbReference>
<dbReference type="Proteomes" id="UP000002565">
    <property type="component" value="Chromosome 1"/>
</dbReference>
<dbReference type="GO" id="GO:0005737">
    <property type="term" value="C:cytoplasm"/>
    <property type="evidence" value="ECO:0007669"/>
    <property type="project" value="UniProtKB-SubCell"/>
</dbReference>
<dbReference type="GO" id="GO:0004055">
    <property type="term" value="F:argininosuccinate synthase activity"/>
    <property type="evidence" value="ECO:0007669"/>
    <property type="project" value="UniProtKB-UniRule"/>
</dbReference>
<dbReference type="GO" id="GO:0005524">
    <property type="term" value="F:ATP binding"/>
    <property type="evidence" value="ECO:0007669"/>
    <property type="project" value="UniProtKB-UniRule"/>
</dbReference>
<dbReference type="GO" id="GO:0000053">
    <property type="term" value="P:argininosuccinate metabolic process"/>
    <property type="evidence" value="ECO:0007669"/>
    <property type="project" value="TreeGrafter"/>
</dbReference>
<dbReference type="GO" id="GO:0006526">
    <property type="term" value="P:L-arginine biosynthetic process"/>
    <property type="evidence" value="ECO:0007669"/>
    <property type="project" value="UniProtKB-UniRule"/>
</dbReference>
<dbReference type="GO" id="GO:0000050">
    <property type="term" value="P:urea cycle"/>
    <property type="evidence" value="ECO:0007669"/>
    <property type="project" value="TreeGrafter"/>
</dbReference>
<dbReference type="CDD" id="cd01999">
    <property type="entry name" value="ASS"/>
    <property type="match status" value="1"/>
</dbReference>
<dbReference type="FunFam" id="3.40.50.620:FF:000019">
    <property type="entry name" value="Argininosuccinate synthase"/>
    <property type="match status" value="1"/>
</dbReference>
<dbReference type="FunFam" id="3.90.1260.10:FF:000007">
    <property type="entry name" value="Argininosuccinate synthase"/>
    <property type="match status" value="1"/>
</dbReference>
<dbReference type="Gene3D" id="3.90.1260.10">
    <property type="entry name" value="Argininosuccinate synthetase, chain A, domain 2"/>
    <property type="match status" value="1"/>
</dbReference>
<dbReference type="Gene3D" id="3.40.50.620">
    <property type="entry name" value="HUPs"/>
    <property type="match status" value="1"/>
</dbReference>
<dbReference type="Gene3D" id="1.20.5.470">
    <property type="entry name" value="Single helix bin"/>
    <property type="match status" value="1"/>
</dbReference>
<dbReference type="HAMAP" id="MF_00005">
    <property type="entry name" value="Arg_succ_synth_type1"/>
    <property type="match status" value="1"/>
</dbReference>
<dbReference type="InterPro" id="IPR048268">
    <property type="entry name" value="Arginosuc_syn_C"/>
</dbReference>
<dbReference type="InterPro" id="IPR048267">
    <property type="entry name" value="Arginosuc_syn_N"/>
</dbReference>
<dbReference type="InterPro" id="IPR001518">
    <property type="entry name" value="Arginosuc_synth"/>
</dbReference>
<dbReference type="InterPro" id="IPR018223">
    <property type="entry name" value="Arginosuc_synth_CS"/>
</dbReference>
<dbReference type="InterPro" id="IPR023434">
    <property type="entry name" value="Arginosuc_synth_type_1_subfam"/>
</dbReference>
<dbReference type="InterPro" id="IPR024074">
    <property type="entry name" value="AS_cat/multimer_dom_body"/>
</dbReference>
<dbReference type="InterPro" id="IPR014729">
    <property type="entry name" value="Rossmann-like_a/b/a_fold"/>
</dbReference>
<dbReference type="NCBIfam" id="TIGR00032">
    <property type="entry name" value="argG"/>
    <property type="match status" value="1"/>
</dbReference>
<dbReference type="NCBIfam" id="NF001770">
    <property type="entry name" value="PRK00509.1"/>
    <property type="match status" value="1"/>
</dbReference>
<dbReference type="PANTHER" id="PTHR11587">
    <property type="entry name" value="ARGININOSUCCINATE SYNTHASE"/>
    <property type="match status" value="1"/>
</dbReference>
<dbReference type="PANTHER" id="PTHR11587:SF2">
    <property type="entry name" value="ARGININOSUCCINATE SYNTHASE"/>
    <property type="match status" value="1"/>
</dbReference>
<dbReference type="Pfam" id="PF20979">
    <property type="entry name" value="Arginosuc_syn_C"/>
    <property type="match status" value="1"/>
</dbReference>
<dbReference type="Pfam" id="PF00764">
    <property type="entry name" value="Arginosuc_synth"/>
    <property type="match status" value="1"/>
</dbReference>
<dbReference type="SUPFAM" id="SSF52402">
    <property type="entry name" value="Adenine nucleotide alpha hydrolases-like"/>
    <property type="match status" value="1"/>
</dbReference>
<dbReference type="SUPFAM" id="SSF69864">
    <property type="entry name" value="Argininosuccinate synthetase, C-terminal domain"/>
    <property type="match status" value="1"/>
</dbReference>
<dbReference type="PROSITE" id="PS00564">
    <property type="entry name" value="ARGININOSUCCIN_SYN_1"/>
    <property type="match status" value="1"/>
</dbReference>
<dbReference type="PROSITE" id="PS00565">
    <property type="entry name" value="ARGININOSUCCIN_SYN_2"/>
    <property type="match status" value="1"/>
</dbReference>
<accession>B2S7X3</accession>
<sequence>MSKWKDVKKVVLAYSGGLDTSIILKWLQTELGAEVVTFTADLGQGEELEPARKKAEMLGIKEIFIEDVREEFVRDFVFPMFRANAVYEGVYLLGTSIARPLISKHLIDIAKKTGADAIAHGATGKGNDQVRFELSAYALNPDIKIIAPWRDWSFKSRTQLLEFAEQHQIPVAKDKKGEAPFSVDANLLHSSSEGKVLEDPSQEAPEYVHMRTISPETAPDKATIIKIGFEKGDAVSINGERLSPATLLAKLNDYGRDNGIGRLDLVENRFVGMKSRGVYETPGGTILLAAHRAIESITLDRGAAHLKDELMPRYAELIYYGFWFSPEREMLQAAIDHSQRHVEGEVTLKLYKGNVMVIGRESAKSLYSDKLVTFEDDQGAYDQKDAAGFIKLNALRLRTLAARDRK</sequence>
<reference key="1">
    <citation type="journal article" date="2008" name="PLoS ONE">
        <title>Genome sequence of Brucella abortus vaccine strain S19 compared to virulent strains yields candidate virulence genes.</title>
        <authorList>
            <person name="Crasta O.R."/>
            <person name="Folkerts O."/>
            <person name="Fei Z."/>
            <person name="Mane S.P."/>
            <person name="Evans C."/>
            <person name="Martino-Catt S."/>
            <person name="Bricker B."/>
            <person name="Yu G."/>
            <person name="Du L."/>
            <person name="Sobral B.W."/>
        </authorList>
    </citation>
    <scope>NUCLEOTIDE SEQUENCE [LARGE SCALE GENOMIC DNA]</scope>
    <source>
        <strain>S19</strain>
    </source>
</reference>
<feature type="chain" id="PRO_1000089024" description="Argininosuccinate synthase">
    <location>
        <begin position="1"/>
        <end position="406"/>
    </location>
</feature>
<feature type="binding site" evidence="1">
    <location>
        <begin position="13"/>
        <end position="21"/>
    </location>
    <ligand>
        <name>ATP</name>
        <dbReference type="ChEBI" id="CHEBI:30616"/>
    </ligand>
</feature>
<feature type="binding site" evidence="1">
    <location>
        <position position="40"/>
    </location>
    <ligand>
        <name>ATP</name>
        <dbReference type="ChEBI" id="CHEBI:30616"/>
    </ligand>
</feature>
<feature type="binding site" evidence="1">
    <location>
        <position position="91"/>
    </location>
    <ligand>
        <name>L-citrulline</name>
        <dbReference type="ChEBI" id="CHEBI:57743"/>
    </ligand>
</feature>
<feature type="binding site" evidence="1">
    <location>
        <position position="96"/>
    </location>
    <ligand>
        <name>L-citrulline</name>
        <dbReference type="ChEBI" id="CHEBI:57743"/>
    </ligand>
</feature>
<feature type="binding site" evidence="1">
    <location>
        <position position="121"/>
    </location>
    <ligand>
        <name>ATP</name>
        <dbReference type="ChEBI" id="CHEBI:30616"/>
    </ligand>
</feature>
<feature type="binding site" evidence="1">
    <location>
        <position position="123"/>
    </location>
    <ligand>
        <name>L-aspartate</name>
        <dbReference type="ChEBI" id="CHEBI:29991"/>
    </ligand>
</feature>
<feature type="binding site" evidence="1">
    <location>
        <position position="127"/>
    </location>
    <ligand>
        <name>L-aspartate</name>
        <dbReference type="ChEBI" id="CHEBI:29991"/>
    </ligand>
</feature>
<feature type="binding site" evidence="1">
    <location>
        <position position="127"/>
    </location>
    <ligand>
        <name>L-citrulline</name>
        <dbReference type="ChEBI" id="CHEBI:57743"/>
    </ligand>
</feature>
<feature type="binding site" evidence="1">
    <location>
        <position position="128"/>
    </location>
    <ligand>
        <name>L-aspartate</name>
        <dbReference type="ChEBI" id="CHEBI:29991"/>
    </ligand>
</feature>
<feature type="binding site" evidence="1">
    <location>
        <position position="131"/>
    </location>
    <ligand>
        <name>L-citrulline</name>
        <dbReference type="ChEBI" id="CHEBI:57743"/>
    </ligand>
</feature>
<feature type="binding site" evidence="1">
    <location>
        <position position="182"/>
    </location>
    <ligand>
        <name>L-citrulline</name>
        <dbReference type="ChEBI" id="CHEBI:57743"/>
    </ligand>
</feature>
<feature type="binding site" evidence="1">
    <location>
        <position position="191"/>
    </location>
    <ligand>
        <name>L-citrulline</name>
        <dbReference type="ChEBI" id="CHEBI:57743"/>
    </ligand>
</feature>
<feature type="binding site" evidence="1">
    <location>
        <position position="267"/>
    </location>
    <ligand>
        <name>L-citrulline</name>
        <dbReference type="ChEBI" id="CHEBI:57743"/>
    </ligand>
</feature>
<feature type="binding site" evidence="1">
    <location>
        <position position="279"/>
    </location>
    <ligand>
        <name>L-citrulline</name>
        <dbReference type="ChEBI" id="CHEBI:57743"/>
    </ligand>
</feature>
<protein>
    <recommendedName>
        <fullName evidence="1">Argininosuccinate synthase</fullName>
        <ecNumber evidence="1">6.3.4.5</ecNumber>
    </recommendedName>
    <alternativeName>
        <fullName evidence="1">Citrulline--aspartate ligase</fullName>
    </alternativeName>
</protein>